<proteinExistence type="evidence at protein level"/>
<keyword id="KW-0158">Chromosome</keyword>
<keyword id="KW-0175">Coiled coil</keyword>
<keyword id="KW-0489">Methyltransferase</keyword>
<keyword id="KW-0539">Nucleus</keyword>
<keyword id="KW-0597">Phosphoprotein</keyword>
<keyword id="KW-1185">Reference proteome</keyword>
<keyword id="KW-0698">rRNA processing</keyword>
<keyword id="KW-0949">S-adenosyl-L-methionine</keyword>
<keyword id="KW-0779">Telomere</keyword>
<keyword id="KW-0808">Transferase</keyword>
<dbReference type="EC" id="2.1.1.287"/>
<dbReference type="EMBL" id="X82086">
    <property type="protein sequence ID" value="CAA57610.1"/>
    <property type="status" value="ALT_FRAME"/>
    <property type="molecule type" value="Genomic_DNA"/>
</dbReference>
<dbReference type="EMBL" id="Z46796">
    <property type="protein sequence ID" value="CAA86805.1"/>
    <property type="status" value="ALT_INIT"/>
    <property type="molecule type" value="Genomic_DNA"/>
</dbReference>
<dbReference type="EMBL" id="Z74379">
    <property type="protein sequence ID" value="CAA98903.1"/>
    <property type="status" value="ALT_FRAME"/>
    <property type="molecule type" value="Genomic_DNA"/>
</dbReference>
<dbReference type="EMBL" id="BK006938">
    <property type="protein sequence ID" value="DAA11930.1"/>
    <property type="molecule type" value="Genomic_DNA"/>
</dbReference>
<dbReference type="PIR" id="S48770">
    <property type="entry name" value="S48770"/>
</dbReference>
<dbReference type="RefSeq" id="NP_010368.5">
    <property type="nucleotide sequence ID" value="NM_001180391.3"/>
</dbReference>
<dbReference type="SMR" id="P38961"/>
<dbReference type="BioGRID" id="32139">
    <property type="interactions" value="389"/>
</dbReference>
<dbReference type="FunCoup" id="P38961">
    <property type="interactions" value="381"/>
</dbReference>
<dbReference type="IntAct" id="P38961">
    <property type="interactions" value="54"/>
</dbReference>
<dbReference type="STRING" id="4932.YDR083W"/>
<dbReference type="iPTMnet" id="P38961"/>
<dbReference type="PaxDb" id="4932-YDR083W"/>
<dbReference type="PeptideAtlas" id="P38961"/>
<dbReference type="EnsemblFungi" id="YDR083W_mRNA">
    <property type="protein sequence ID" value="YDR083W"/>
    <property type="gene ID" value="YDR083W"/>
</dbReference>
<dbReference type="GeneID" id="851656"/>
<dbReference type="KEGG" id="sce:YDR083W"/>
<dbReference type="AGR" id="SGD:S000002490"/>
<dbReference type="SGD" id="S000002490">
    <property type="gene designation" value="RRP8"/>
</dbReference>
<dbReference type="VEuPathDB" id="FungiDB:YDR083W"/>
<dbReference type="eggNOG" id="KOG3045">
    <property type="taxonomic scope" value="Eukaryota"/>
</dbReference>
<dbReference type="GeneTree" id="ENSGT00390000006189"/>
<dbReference type="HOGENOM" id="CLU_027694_1_0_1"/>
<dbReference type="InParanoid" id="P38961"/>
<dbReference type="OMA" id="SCTIVVF"/>
<dbReference type="OrthoDB" id="10258825at2759"/>
<dbReference type="BioCyc" id="YEAST:G3O-29688-MONOMER"/>
<dbReference type="BRENDA" id="2.1.1.287">
    <property type="organism ID" value="984"/>
</dbReference>
<dbReference type="Reactome" id="R-SCE-427359">
    <property type="pathway name" value="SIRT1 negatively regulates rRNA expression"/>
</dbReference>
<dbReference type="BioGRID-ORCS" id="851656">
    <property type="hits" value="0 hits in 10 CRISPR screens"/>
</dbReference>
<dbReference type="CD-CODE" id="BDAE0F88">
    <property type="entry name" value="Nucleolus"/>
</dbReference>
<dbReference type="PRO" id="PR:P38961"/>
<dbReference type="Proteomes" id="UP000002311">
    <property type="component" value="Chromosome IV"/>
</dbReference>
<dbReference type="RNAct" id="P38961">
    <property type="molecule type" value="protein"/>
</dbReference>
<dbReference type="GO" id="GO:0030686">
    <property type="term" value="C:90S preribosome"/>
    <property type="evidence" value="ECO:0000314"/>
    <property type="project" value="GO_Central"/>
</dbReference>
<dbReference type="GO" id="GO:0000781">
    <property type="term" value="C:chromosome, telomeric region"/>
    <property type="evidence" value="ECO:0007669"/>
    <property type="project" value="UniProtKB-SubCell"/>
</dbReference>
<dbReference type="GO" id="GO:0005730">
    <property type="term" value="C:nucleolus"/>
    <property type="evidence" value="ECO:0000314"/>
    <property type="project" value="GO_Central"/>
</dbReference>
<dbReference type="GO" id="GO:0016433">
    <property type="term" value="F:rRNA (adenine) methyltransferase activity"/>
    <property type="evidence" value="ECO:0000315"/>
    <property type="project" value="SGD"/>
</dbReference>
<dbReference type="GO" id="GO:0106142">
    <property type="term" value="F:rRNA (adenine-N1-)-methyltransferase activity"/>
    <property type="evidence" value="ECO:0007669"/>
    <property type="project" value="UniProtKB-EC"/>
</dbReference>
<dbReference type="GO" id="GO:0042273">
    <property type="term" value="P:ribosomal large subunit biogenesis"/>
    <property type="evidence" value="ECO:0000316"/>
    <property type="project" value="SGD"/>
</dbReference>
<dbReference type="GO" id="GO:0031167">
    <property type="term" value="P:rRNA methylation"/>
    <property type="evidence" value="ECO:0000315"/>
    <property type="project" value="SGD"/>
</dbReference>
<dbReference type="GO" id="GO:0006364">
    <property type="term" value="P:rRNA processing"/>
    <property type="evidence" value="ECO:0000315"/>
    <property type="project" value="SGD"/>
</dbReference>
<dbReference type="CDD" id="cd02440">
    <property type="entry name" value="AdoMet_MTases"/>
    <property type="match status" value="1"/>
</dbReference>
<dbReference type="FunFam" id="1.10.10.2150:FF:000001">
    <property type="entry name" value="Ribosomal RNA-processing protein 8"/>
    <property type="match status" value="1"/>
</dbReference>
<dbReference type="FunFam" id="3.40.50.150:FF:000320">
    <property type="entry name" value="Ribosomal RNA-processing protein 8"/>
    <property type="match status" value="1"/>
</dbReference>
<dbReference type="Gene3D" id="1.10.10.2150">
    <property type="entry name" value="Ribosomal RNA-processing protein 8, N-terminal domain"/>
    <property type="match status" value="1"/>
</dbReference>
<dbReference type="Gene3D" id="3.40.50.150">
    <property type="entry name" value="Vaccinia Virus protein VP39"/>
    <property type="match status" value="1"/>
</dbReference>
<dbReference type="InterPro" id="IPR007823">
    <property type="entry name" value="RRP8"/>
</dbReference>
<dbReference type="InterPro" id="IPR042036">
    <property type="entry name" value="RRP8_N"/>
</dbReference>
<dbReference type="InterPro" id="IPR029063">
    <property type="entry name" value="SAM-dependent_MTases_sf"/>
</dbReference>
<dbReference type="PANTHER" id="PTHR12787">
    <property type="entry name" value="RIBOSOMAL RNA-PROCESSING PROTEIN 8"/>
    <property type="match status" value="1"/>
</dbReference>
<dbReference type="PANTHER" id="PTHR12787:SF0">
    <property type="entry name" value="RIBOSOMAL RNA-PROCESSING PROTEIN 8"/>
    <property type="match status" value="1"/>
</dbReference>
<dbReference type="Pfam" id="PF05148">
    <property type="entry name" value="Methyltransf_8"/>
    <property type="match status" value="1"/>
</dbReference>
<dbReference type="SUPFAM" id="SSF53335">
    <property type="entry name" value="S-adenosyl-L-methionine-dependent methyltransferases"/>
    <property type="match status" value="1"/>
</dbReference>
<protein>
    <recommendedName>
        <fullName>25S rRNA (adenine(645)-N(1))-methyltransferase</fullName>
        <ecNumber>2.1.1.287</ecNumber>
    </recommendedName>
    <alternativeName>
        <fullName>Ribosomal RNA-processing protein 8</fullName>
    </alternativeName>
</protein>
<reference key="1">
    <citation type="journal article" date="2000" name="RNA">
        <title>Rrp8p is a yeast nucleolar protein functionally linked to Gar1p and involved in pre-rRNA cleavage at site A2.</title>
        <authorList>
            <person name="Bousquet-Antonelli C."/>
            <person name="Vanrobays E."/>
            <person name="Gelugne J.P."/>
            <person name="Caizergues-Ferrer M."/>
            <person name="Henry Y."/>
        </authorList>
    </citation>
    <scope>NUCLEOTIDE SEQUENCE [GENOMIC DNA]</scope>
    <scope>FUNCTION</scope>
    <scope>SUBCELLULAR LOCATION</scope>
    <scope>MUTAGENESIS OF LYS-390</scope>
    <source>
        <strain>JG535-2D</strain>
    </source>
</reference>
<reference key="2">
    <citation type="journal article" date="1995" name="Yeast">
        <title>Analysis of a 32.8 kb segment of yeast chromosome IV reveals 21 open reading frames, including TPS2, PPH3, RAD55, SED1, PDC2, AFR1, SSS1, SLU7 and a tRNA for arginine.</title>
        <authorList>
            <person name="Coster F."/>
            <person name="Jonniaux J.-L."/>
            <person name="Goffeau A."/>
        </authorList>
    </citation>
    <scope>NUCLEOTIDE SEQUENCE [GENOMIC DNA]</scope>
    <source>
        <strain>ATCC 96604 / S288c / FY1679</strain>
    </source>
</reference>
<reference key="3">
    <citation type="journal article" date="1997" name="Nature">
        <title>The nucleotide sequence of Saccharomyces cerevisiae chromosome IV.</title>
        <authorList>
            <person name="Jacq C."/>
            <person name="Alt-Moerbe J."/>
            <person name="Andre B."/>
            <person name="Arnold W."/>
            <person name="Bahr A."/>
            <person name="Ballesta J.P.G."/>
            <person name="Bargues M."/>
            <person name="Baron L."/>
            <person name="Becker A."/>
            <person name="Biteau N."/>
            <person name="Bloecker H."/>
            <person name="Blugeon C."/>
            <person name="Boskovic J."/>
            <person name="Brandt P."/>
            <person name="Brueckner M."/>
            <person name="Buitrago M.J."/>
            <person name="Coster F."/>
            <person name="Delaveau T."/>
            <person name="del Rey F."/>
            <person name="Dujon B."/>
            <person name="Eide L.G."/>
            <person name="Garcia-Cantalejo J.M."/>
            <person name="Goffeau A."/>
            <person name="Gomez-Peris A."/>
            <person name="Granotier C."/>
            <person name="Hanemann V."/>
            <person name="Hankeln T."/>
            <person name="Hoheisel J.D."/>
            <person name="Jaeger W."/>
            <person name="Jimenez A."/>
            <person name="Jonniaux J.-L."/>
            <person name="Kraemer C."/>
            <person name="Kuester H."/>
            <person name="Laamanen P."/>
            <person name="Legros Y."/>
            <person name="Louis E.J."/>
            <person name="Moeller-Rieker S."/>
            <person name="Monnet A."/>
            <person name="Moro M."/>
            <person name="Mueller-Auer S."/>
            <person name="Nussbaumer B."/>
            <person name="Paricio N."/>
            <person name="Paulin L."/>
            <person name="Perea J."/>
            <person name="Perez-Alonso M."/>
            <person name="Perez-Ortin J.E."/>
            <person name="Pohl T.M."/>
            <person name="Prydz H."/>
            <person name="Purnelle B."/>
            <person name="Rasmussen S.W."/>
            <person name="Remacha M.A."/>
            <person name="Revuelta J.L."/>
            <person name="Rieger M."/>
            <person name="Salom D."/>
            <person name="Saluz H.P."/>
            <person name="Saiz J.E."/>
            <person name="Saren A.-M."/>
            <person name="Schaefer M."/>
            <person name="Scharfe M."/>
            <person name="Schmidt E.R."/>
            <person name="Schneider C."/>
            <person name="Scholler P."/>
            <person name="Schwarz S."/>
            <person name="Soler-Mira A."/>
            <person name="Urrestarazu L.A."/>
            <person name="Verhasselt P."/>
            <person name="Vissers S."/>
            <person name="Voet M."/>
            <person name="Volckaert G."/>
            <person name="Wagner G."/>
            <person name="Wambutt R."/>
            <person name="Wedler E."/>
            <person name="Wedler H."/>
            <person name="Woelfl S."/>
            <person name="Harris D.E."/>
            <person name="Bowman S."/>
            <person name="Brown D."/>
            <person name="Churcher C.M."/>
            <person name="Connor R."/>
            <person name="Dedman K."/>
            <person name="Gentles S."/>
            <person name="Hamlin N."/>
            <person name="Hunt S."/>
            <person name="Jones L."/>
            <person name="McDonald S."/>
            <person name="Murphy L.D."/>
            <person name="Niblett D."/>
            <person name="Odell C."/>
            <person name="Oliver K."/>
            <person name="Rajandream M.A."/>
            <person name="Richards C."/>
            <person name="Shore L."/>
            <person name="Walsh S.V."/>
            <person name="Barrell B.G."/>
            <person name="Dietrich F.S."/>
            <person name="Mulligan J.T."/>
            <person name="Allen E."/>
            <person name="Araujo R."/>
            <person name="Aviles E."/>
            <person name="Berno A."/>
            <person name="Carpenter J."/>
            <person name="Chen E."/>
            <person name="Cherry J.M."/>
            <person name="Chung E."/>
            <person name="Duncan M."/>
            <person name="Hunicke-Smith S."/>
            <person name="Hyman R.W."/>
            <person name="Komp C."/>
            <person name="Lashkari D."/>
            <person name="Lew H."/>
            <person name="Lin D."/>
            <person name="Mosedale D."/>
            <person name="Nakahara K."/>
            <person name="Namath A."/>
            <person name="Oefner P."/>
            <person name="Oh C."/>
            <person name="Petel F.X."/>
            <person name="Roberts D."/>
            <person name="Schramm S."/>
            <person name="Schroeder M."/>
            <person name="Shogren T."/>
            <person name="Shroff N."/>
            <person name="Winant A."/>
            <person name="Yelton M.A."/>
            <person name="Botstein D."/>
            <person name="Davis R.W."/>
            <person name="Johnston M."/>
            <person name="Andrews S."/>
            <person name="Brinkman R."/>
            <person name="Cooper J."/>
            <person name="Ding H."/>
            <person name="Du Z."/>
            <person name="Favello A."/>
            <person name="Fulton L."/>
            <person name="Gattung S."/>
            <person name="Greco T."/>
            <person name="Hallsworth K."/>
            <person name="Hawkins J."/>
            <person name="Hillier L.W."/>
            <person name="Jier M."/>
            <person name="Johnson D."/>
            <person name="Johnston L."/>
            <person name="Kirsten J."/>
            <person name="Kucaba T."/>
            <person name="Langston Y."/>
            <person name="Latreille P."/>
            <person name="Le T."/>
            <person name="Mardis E."/>
            <person name="Menezes S."/>
            <person name="Miller N."/>
            <person name="Nhan M."/>
            <person name="Pauley A."/>
            <person name="Peluso D."/>
            <person name="Rifkin L."/>
            <person name="Riles L."/>
            <person name="Taich A."/>
            <person name="Trevaskis E."/>
            <person name="Vignati D."/>
            <person name="Wilcox L."/>
            <person name="Wohldman P."/>
            <person name="Vaudin M."/>
            <person name="Wilson R."/>
            <person name="Waterston R."/>
            <person name="Albermann K."/>
            <person name="Hani J."/>
            <person name="Heumann K."/>
            <person name="Kleine K."/>
            <person name="Mewes H.-W."/>
            <person name="Zollner A."/>
            <person name="Zaccaria P."/>
        </authorList>
    </citation>
    <scope>NUCLEOTIDE SEQUENCE [LARGE SCALE GENOMIC DNA]</scope>
    <source>
        <strain>ATCC 204508 / S288c</strain>
    </source>
</reference>
<reference key="4">
    <citation type="journal article" date="2014" name="G3 (Bethesda)">
        <title>The reference genome sequence of Saccharomyces cerevisiae: Then and now.</title>
        <authorList>
            <person name="Engel S.R."/>
            <person name="Dietrich F.S."/>
            <person name="Fisk D.G."/>
            <person name="Binkley G."/>
            <person name="Balakrishnan R."/>
            <person name="Costanzo M.C."/>
            <person name="Dwight S.S."/>
            <person name="Hitz B.C."/>
            <person name="Karra K."/>
            <person name="Nash R.S."/>
            <person name="Weng S."/>
            <person name="Wong E.D."/>
            <person name="Lloyd P."/>
            <person name="Skrzypek M.S."/>
            <person name="Miyasato S.R."/>
            <person name="Simison M."/>
            <person name="Cherry J.M."/>
        </authorList>
    </citation>
    <scope>GENOME REANNOTATION</scope>
    <source>
        <strain>ATCC 204508 / S288c</strain>
    </source>
</reference>
<reference key="5">
    <citation type="journal article" date="2003" name="Nature">
        <title>Global analysis of protein localization in budding yeast.</title>
        <authorList>
            <person name="Huh W.-K."/>
            <person name="Falvo J.V."/>
            <person name="Gerke L.C."/>
            <person name="Carroll A.S."/>
            <person name="Howson R.W."/>
            <person name="Weissman J.S."/>
            <person name="O'Shea E.K."/>
        </authorList>
    </citation>
    <scope>SUBCELLULAR LOCATION [LARGE SCALE ANALYSIS]</scope>
</reference>
<reference key="6">
    <citation type="journal article" date="2003" name="Nature">
        <title>Global analysis of protein expression in yeast.</title>
        <authorList>
            <person name="Ghaemmaghami S."/>
            <person name="Huh W.-K."/>
            <person name="Bower K."/>
            <person name="Howson R.W."/>
            <person name="Belle A."/>
            <person name="Dephoure N."/>
            <person name="O'Shea E.K."/>
            <person name="Weissman J.S."/>
        </authorList>
    </citation>
    <scope>LEVEL OF PROTEIN EXPRESSION [LARGE SCALE ANALYSIS]</scope>
</reference>
<reference key="7">
    <citation type="journal article" date="2004" name="Proc. Natl. Acad. Sci. U.S.A.">
        <title>A genome-wide screen for Saccharomyces cerevisiae deletion mutants that affect telomere length.</title>
        <authorList>
            <person name="Askree S.H."/>
            <person name="Yehuda T."/>
            <person name="Smolikov S."/>
            <person name="Gurevich R."/>
            <person name="Hawk J."/>
            <person name="Coker C."/>
            <person name="Krauskopf A."/>
            <person name="Kupiec M."/>
            <person name="McEachern M.J."/>
        </authorList>
    </citation>
    <scope>FUNCTION</scope>
</reference>
<reference key="8">
    <citation type="journal article" date="2006" name="PLoS Genet.">
        <title>Telomere length as a quantitative trait: genome-wide survey and genetic mapping of telomere length-control genes in yeast.</title>
        <authorList>
            <person name="Gatbonton T."/>
            <person name="Imbesi M."/>
            <person name="Nelson M."/>
            <person name="Akey J.M."/>
            <person name="Ruderfer D.M."/>
            <person name="Kruglyak L."/>
            <person name="Simon J.A."/>
            <person name="Bedalov A."/>
        </authorList>
    </citation>
    <scope>FUNCTION</scope>
</reference>
<reference key="9">
    <citation type="journal article" date="2008" name="Mol. Cell. Proteomics">
        <title>A multidimensional chromatography technology for in-depth phosphoproteome analysis.</title>
        <authorList>
            <person name="Albuquerque C.P."/>
            <person name="Smolka M.B."/>
            <person name="Payne S.H."/>
            <person name="Bafna V."/>
            <person name="Eng J."/>
            <person name="Zhou H."/>
        </authorList>
    </citation>
    <scope>PHOSPHORYLATION [LARGE SCALE ANALYSIS] AT SER-62</scope>
    <scope>IDENTIFICATION BY MASS SPECTROMETRY [LARGE SCALE ANALYSIS]</scope>
</reference>
<reference key="10">
    <citation type="journal article" date="2013" name="Nucleic Acids Res.">
        <title>Yeast Rrp8p, a novel methyltransferase responsible for m1A 645 base modification of 25S rRNA.</title>
        <authorList>
            <person name="Peifer C."/>
            <person name="Sharma S."/>
            <person name="Watzinger P."/>
            <person name="Lamberth S."/>
            <person name="Kotter P."/>
            <person name="Entian K.D."/>
        </authorList>
    </citation>
    <scope>FUNCTION</scope>
    <scope>CATALYTIC ACTIVITY</scope>
    <scope>SUBCELLULAR LOCATION</scope>
    <scope>MUTAGENESIS OF GLY-209</scope>
</reference>
<accession>P38961</accession>
<accession>Q7LHG2</accession>
<gene>
    <name type="primary">RRP8</name>
    <name type="ordered locus">YDR083W</name>
    <name type="ORF">D4461</name>
</gene>
<sequence length="392" mass="45985">MALFNVEGWSIKTKTVAFDNKTNKSSKDKKKNNRKNGKLTREQKLKEETEAELKEQVEDIPSEGSVAKDIPKKNQEKSDQNETSKKRKHDEEAPLMQVKENIEKPTKKQLTPLQQKMMAKLTGSRFRWINEQLYTISSDEALKLIKEQPQLFDEYHDGFRSQVQAWPENPVDVFVDQIRYRCMKPVNAPGGLPGLKDSKEIVIADMGCGEAQLALEINNFFKNYNKKAKKYLKRRHKVHSFDLKKANERITVADIRNVPLPDESCTIVVFCLALMGTNFLDFIKEAYRILAPRGELWIAEIKSRFSDGKGNEFVDALKLMGFFHKKTFDENKMFTRFEFFKPPAEIIEERRQKLERRQKFIEVETEKEELEKKRRKIAEGKWLLKPCIYKRR</sequence>
<name>RRP8_YEAST</name>
<comment type="function">
    <text evidence="4 7 8 9">S-adenosyl-L-methionine-dependent methyltransferase that specifically methylates the N(1) position of adenine 645 in 25S rRNA. Required both for ribosomal 40S and 60S subunits biogenesis. Required for efficient pre-rRNA cleavage at site A2. Also involved in telomere length regulation and maintenance.</text>
</comment>
<comment type="catalytic activity">
    <reaction evidence="9">
        <text>adenosine(645) in 25S rRNA + S-adenosyl-L-methionine = N(1)-methyladenosine(645) in 25S rRNA + S-adenosyl-L-homocysteine + H(+)</text>
        <dbReference type="Rhea" id="RHEA:43792"/>
        <dbReference type="Rhea" id="RHEA-COMP:10695"/>
        <dbReference type="Rhea" id="RHEA-COMP:10696"/>
        <dbReference type="ChEBI" id="CHEBI:15378"/>
        <dbReference type="ChEBI" id="CHEBI:57856"/>
        <dbReference type="ChEBI" id="CHEBI:59789"/>
        <dbReference type="ChEBI" id="CHEBI:74411"/>
        <dbReference type="ChEBI" id="CHEBI:74491"/>
        <dbReference type="EC" id="2.1.1.287"/>
    </reaction>
</comment>
<comment type="subcellular location">
    <subcellularLocation>
        <location evidence="4 5 9">Nucleus</location>
        <location evidence="4 5 9">Nucleolus</location>
    </subcellularLocation>
    <subcellularLocation>
        <location evidence="10">Chromosome</location>
        <location evidence="10">Telomere</location>
    </subcellularLocation>
</comment>
<comment type="miscellaneous">
    <text evidence="6">Present with 2780 molecules/cell in log phase SD medium.</text>
</comment>
<comment type="similarity">
    <text evidence="10">Belongs to the methyltransferase superfamily. RRP8 family.</text>
</comment>
<comment type="sequence caution" evidence="10">
    <conflict type="frameshift">
        <sequence resource="EMBL-CDS" id="CAA57610"/>
    </conflict>
</comment>
<comment type="sequence caution" evidence="10">
    <conflict type="erroneous initiation">
        <sequence resource="EMBL-CDS" id="CAA86805"/>
    </conflict>
</comment>
<comment type="sequence caution" evidence="10">
    <conflict type="frameshift">
        <sequence resource="EMBL-CDS" id="CAA98903"/>
    </conflict>
</comment>
<evidence type="ECO:0000250" key="1">
    <source>
        <dbReference type="UniProtKB" id="O43159"/>
    </source>
</evidence>
<evidence type="ECO:0000255" key="2"/>
<evidence type="ECO:0000256" key="3">
    <source>
        <dbReference type="SAM" id="MobiDB-lite"/>
    </source>
</evidence>
<evidence type="ECO:0000269" key="4">
    <source>
    </source>
</evidence>
<evidence type="ECO:0000269" key="5">
    <source>
    </source>
</evidence>
<evidence type="ECO:0000269" key="6">
    <source>
    </source>
</evidence>
<evidence type="ECO:0000269" key="7">
    <source>
    </source>
</evidence>
<evidence type="ECO:0000269" key="8">
    <source>
    </source>
</evidence>
<evidence type="ECO:0000269" key="9">
    <source>
    </source>
</evidence>
<evidence type="ECO:0000305" key="10"/>
<evidence type="ECO:0007744" key="11">
    <source>
    </source>
</evidence>
<feature type="chain" id="PRO_0000202594" description="25S rRNA (adenine(645)-N(1))-methyltransferase">
    <location>
        <begin position="1"/>
        <end position="392"/>
    </location>
</feature>
<feature type="region of interest" description="Disordered" evidence="3">
    <location>
        <begin position="1"/>
        <end position="96"/>
    </location>
</feature>
<feature type="coiled-coil region" evidence="2">
    <location>
        <begin position="32"/>
        <end position="61"/>
    </location>
</feature>
<feature type="coiled-coil region" evidence="2">
    <location>
        <begin position="344"/>
        <end position="382"/>
    </location>
</feature>
<feature type="compositionally biased region" description="Basic residues" evidence="3">
    <location>
        <begin position="27"/>
        <end position="38"/>
    </location>
</feature>
<feature type="compositionally biased region" description="Basic and acidic residues" evidence="3">
    <location>
        <begin position="39"/>
        <end position="57"/>
    </location>
</feature>
<feature type="compositionally biased region" description="Basic and acidic residues" evidence="3">
    <location>
        <begin position="69"/>
        <end position="92"/>
    </location>
</feature>
<feature type="binding site" evidence="1">
    <location>
        <position position="156"/>
    </location>
    <ligand>
        <name>S-adenosyl-L-methionine</name>
        <dbReference type="ChEBI" id="CHEBI:59789"/>
    </ligand>
</feature>
<feature type="binding site" evidence="1">
    <location>
        <position position="207"/>
    </location>
    <ligand>
        <name>S-adenosyl-L-methionine</name>
        <dbReference type="ChEBI" id="CHEBI:59789"/>
    </ligand>
</feature>
<feature type="binding site" evidence="1">
    <location>
        <position position="242"/>
    </location>
    <ligand>
        <name>S-adenosyl-L-methionine</name>
        <dbReference type="ChEBI" id="CHEBI:59789"/>
    </ligand>
</feature>
<feature type="binding site" evidence="1">
    <location>
        <position position="254"/>
    </location>
    <ligand>
        <name>S-adenosyl-L-methionine</name>
        <dbReference type="ChEBI" id="CHEBI:59789"/>
    </ligand>
</feature>
<feature type="binding site" evidence="1">
    <location>
        <position position="271"/>
    </location>
    <ligand>
        <name>S-adenosyl-L-methionine</name>
        <dbReference type="ChEBI" id="CHEBI:59789"/>
    </ligand>
</feature>
<feature type="modified residue" description="Phosphoserine" evidence="11">
    <location>
        <position position="62"/>
    </location>
</feature>
<feature type="mutagenesis site" description="Impaired methyltransferase activity and ribosomal 60S subunit biogenesis. Does not affect pre-rRNA cleavage at site A2 activity." evidence="9">
    <original>G</original>
    <variation>A</variation>
    <variation>R</variation>
    <location>
        <position position="209"/>
    </location>
</feature>
<feature type="mutagenesis site" description="In RRP8-1; no effect. Synthetic lethal with GAR1 mutant allele lacking its N- and C-terminal glycine/arginine-rich (GAR) domains." evidence="4">
    <original>K</original>
    <variation>E</variation>
    <location>
        <position position="390"/>
    </location>
</feature>
<organism>
    <name type="scientific">Saccharomyces cerevisiae (strain ATCC 204508 / S288c)</name>
    <name type="common">Baker's yeast</name>
    <dbReference type="NCBI Taxonomy" id="559292"/>
    <lineage>
        <taxon>Eukaryota</taxon>
        <taxon>Fungi</taxon>
        <taxon>Dikarya</taxon>
        <taxon>Ascomycota</taxon>
        <taxon>Saccharomycotina</taxon>
        <taxon>Saccharomycetes</taxon>
        <taxon>Saccharomycetales</taxon>
        <taxon>Saccharomycetaceae</taxon>
        <taxon>Saccharomyces</taxon>
    </lineage>
</organism>